<sequence length="182" mass="19895">MNLSNHFLIAMPDMEDAFFSQSVVYICKHDEDGALGIAINKPSPITMDMIFSATGKNIPMRMQHDSVMMGGPVQVERGYVVHTPIGNWQSSIGVSDNIALTSSRDVIENISREGAVDKALISIGYSSWSKGQLERELADNAWLTVPADEHILFDIPYEHRYAAAFAKLGIDPLALFSGAGHA</sequence>
<accession>Q9JZ17</accession>
<evidence type="ECO:0000255" key="1">
    <source>
        <dbReference type="HAMAP-Rule" id="MF_00758"/>
    </source>
</evidence>
<name>Y1336_NEIMB</name>
<protein>
    <recommendedName>
        <fullName evidence="1">UPF0301 protein NMB1336</fullName>
    </recommendedName>
</protein>
<reference key="1">
    <citation type="journal article" date="2000" name="Science">
        <title>Complete genome sequence of Neisseria meningitidis serogroup B strain MC58.</title>
        <authorList>
            <person name="Tettelin H."/>
            <person name="Saunders N.J."/>
            <person name="Heidelberg J.F."/>
            <person name="Jeffries A.C."/>
            <person name="Nelson K.E."/>
            <person name="Eisen J.A."/>
            <person name="Ketchum K.A."/>
            <person name="Hood D.W."/>
            <person name="Peden J.F."/>
            <person name="Dodson R.J."/>
            <person name="Nelson W.C."/>
            <person name="Gwinn M.L."/>
            <person name="DeBoy R.T."/>
            <person name="Peterson J.D."/>
            <person name="Hickey E.K."/>
            <person name="Haft D.H."/>
            <person name="Salzberg S.L."/>
            <person name="White O."/>
            <person name="Fleischmann R.D."/>
            <person name="Dougherty B.A."/>
            <person name="Mason T.M."/>
            <person name="Ciecko A."/>
            <person name="Parksey D.S."/>
            <person name="Blair E."/>
            <person name="Cittone H."/>
            <person name="Clark E.B."/>
            <person name="Cotton M.D."/>
            <person name="Utterback T.R."/>
            <person name="Khouri H.M."/>
            <person name="Qin H."/>
            <person name="Vamathevan J.J."/>
            <person name="Gill J."/>
            <person name="Scarlato V."/>
            <person name="Masignani V."/>
            <person name="Pizza M."/>
            <person name="Grandi G."/>
            <person name="Sun L."/>
            <person name="Smith H.O."/>
            <person name="Fraser C.M."/>
            <person name="Moxon E.R."/>
            <person name="Rappuoli R."/>
            <person name="Venter J.C."/>
        </authorList>
    </citation>
    <scope>NUCLEOTIDE SEQUENCE [LARGE SCALE GENOMIC DNA]</scope>
    <source>
        <strain>ATCC BAA-335 / MC58</strain>
    </source>
</reference>
<keyword id="KW-1185">Reference proteome</keyword>
<comment type="similarity">
    <text evidence="1">Belongs to the UPF0301 (AlgH) family.</text>
</comment>
<gene>
    <name type="ordered locus">NMB1336</name>
</gene>
<feature type="chain" id="PRO_0000214332" description="UPF0301 protein NMB1336">
    <location>
        <begin position="1"/>
        <end position="182"/>
    </location>
</feature>
<proteinExistence type="inferred from homology"/>
<organism>
    <name type="scientific">Neisseria meningitidis serogroup B (strain ATCC BAA-335 / MC58)</name>
    <dbReference type="NCBI Taxonomy" id="122586"/>
    <lineage>
        <taxon>Bacteria</taxon>
        <taxon>Pseudomonadati</taxon>
        <taxon>Pseudomonadota</taxon>
        <taxon>Betaproteobacteria</taxon>
        <taxon>Neisseriales</taxon>
        <taxon>Neisseriaceae</taxon>
        <taxon>Neisseria</taxon>
    </lineage>
</organism>
<dbReference type="EMBL" id="AE002098">
    <property type="protein sequence ID" value="AAF41711.1"/>
    <property type="molecule type" value="Genomic_DNA"/>
</dbReference>
<dbReference type="PIR" id="H81093">
    <property type="entry name" value="H81093"/>
</dbReference>
<dbReference type="RefSeq" id="NP_274355.1">
    <property type="nucleotide sequence ID" value="NC_003112.2"/>
</dbReference>
<dbReference type="RefSeq" id="WP_002222355.1">
    <property type="nucleotide sequence ID" value="NC_003112.2"/>
</dbReference>
<dbReference type="SMR" id="Q9JZ17"/>
<dbReference type="FunCoup" id="Q9JZ17">
    <property type="interactions" value="250"/>
</dbReference>
<dbReference type="STRING" id="122586.NMB1336"/>
<dbReference type="PaxDb" id="122586-NMB1336"/>
<dbReference type="KEGG" id="nme:NMB1336"/>
<dbReference type="PATRIC" id="fig|122586.8.peg.1675"/>
<dbReference type="HOGENOM" id="CLU_057596_1_0_4"/>
<dbReference type="InParanoid" id="Q9JZ17"/>
<dbReference type="OrthoDB" id="9807486at2"/>
<dbReference type="Proteomes" id="UP000000425">
    <property type="component" value="Chromosome"/>
</dbReference>
<dbReference type="GO" id="GO:0005829">
    <property type="term" value="C:cytosol"/>
    <property type="evidence" value="ECO:0000318"/>
    <property type="project" value="GO_Central"/>
</dbReference>
<dbReference type="Gene3D" id="3.40.1740.10">
    <property type="entry name" value="VC0467-like"/>
    <property type="match status" value="1"/>
</dbReference>
<dbReference type="HAMAP" id="MF_00758">
    <property type="entry name" value="UPF0301"/>
    <property type="match status" value="1"/>
</dbReference>
<dbReference type="InterPro" id="IPR003774">
    <property type="entry name" value="AlgH-like"/>
</dbReference>
<dbReference type="NCBIfam" id="NF001266">
    <property type="entry name" value="PRK00228.1-1"/>
    <property type="match status" value="1"/>
</dbReference>
<dbReference type="PANTHER" id="PTHR30327">
    <property type="entry name" value="UNCHARACTERIZED PROTEIN YQGE"/>
    <property type="match status" value="1"/>
</dbReference>
<dbReference type="PANTHER" id="PTHR30327:SF1">
    <property type="entry name" value="UPF0301 PROTEIN YQGE"/>
    <property type="match status" value="1"/>
</dbReference>
<dbReference type="Pfam" id="PF02622">
    <property type="entry name" value="DUF179"/>
    <property type="match status" value="1"/>
</dbReference>
<dbReference type="SUPFAM" id="SSF143456">
    <property type="entry name" value="VC0467-like"/>
    <property type="match status" value="1"/>
</dbReference>